<proteinExistence type="inferred from homology"/>
<reference key="1">
    <citation type="journal article" date="2005" name="Proc. Natl. Acad. Sci. U.S.A.">
        <title>Whole genome sequence of Staphylococcus saprophyticus reveals the pathogenesis of uncomplicated urinary tract infection.</title>
        <authorList>
            <person name="Kuroda M."/>
            <person name="Yamashita A."/>
            <person name="Hirakawa H."/>
            <person name="Kumano M."/>
            <person name="Morikawa K."/>
            <person name="Higashide M."/>
            <person name="Maruyama A."/>
            <person name="Inose Y."/>
            <person name="Matoba K."/>
            <person name="Toh H."/>
            <person name="Kuhara S."/>
            <person name="Hattori M."/>
            <person name="Ohta T."/>
        </authorList>
    </citation>
    <scope>NUCLEOTIDE SEQUENCE [LARGE SCALE GENOMIC DNA]</scope>
    <source>
        <strain>ATCC 15305 / DSM 20229 / NCIMB 8711 / NCTC 7292 / S-41</strain>
    </source>
</reference>
<feature type="chain" id="PRO_0000230897" description="Transcriptional repressor NrdR">
    <location>
        <begin position="1"/>
        <end position="156"/>
    </location>
</feature>
<feature type="domain" description="ATP-cone" evidence="1">
    <location>
        <begin position="49"/>
        <end position="139"/>
    </location>
</feature>
<feature type="zinc finger region" evidence="1">
    <location>
        <begin position="3"/>
        <end position="34"/>
    </location>
</feature>
<gene>
    <name evidence="1" type="primary">nrdR</name>
    <name type="ordered locus">SSP1079</name>
</gene>
<protein>
    <recommendedName>
        <fullName evidence="1">Transcriptional repressor NrdR</fullName>
    </recommendedName>
</protein>
<comment type="function">
    <text evidence="1">Negatively regulates transcription of bacterial ribonucleotide reductase nrd genes and operons by binding to NrdR-boxes.</text>
</comment>
<comment type="cofactor">
    <cofactor evidence="1">
        <name>Zn(2+)</name>
        <dbReference type="ChEBI" id="CHEBI:29105"/>
    </cofactor>
    <text evidence="1">Binds 1 zinc ion.</text>
</comment>
<comment type="similarity">
    <text evidence="1">Belongs to the NrdR family.</text>
</comment>
<evidence type="ECO:0000255" key="1">
    <source>
        <dbReference type="HAMAP-Rule" id="MF_00440"/>
    </source>
</evidence>
<dbReference type="EMBL" id="AP008934">
    <property type="protein sequence ID" value="BAE18224.1"/>
    <property type="molecule type" value="Genomic_DNA"/>
</dbReference>
<dbReference type="RefSeq" id="WP_011302921.1">
    <property type="nucleotide sequence ID" value="NZ_MTGA01000038.1"/>
</dbReference>
<dbReference type="SMR" id="Q49YB7"/>
<dbReference type="GeneID" id="66867312"/>
<dbReference type="KEGG" id="ssp:SSP1079"/>
<dbReference type="eggNOG" id="COG1327">
    <property type="taxonomic scope" value="Bacteria"/>
</dbReference>
<dbReference type="HOGENOM" id="CLU_108412_0_0_9"/>
<dbReference type="OrthoDB" id="9807461at2"/>
<dbReference type="Proteomes" id="UP000006371">
    <property type="component" value="Chromosome"/>
</dbReference>
<dbReference type="GO" id="GO:0005524">
    <property type="term" value="F:ATP binding"/>
    <property type="evidence" value="ECO:0007669"/>
    <property type="project" value="UniProtKB-KW"/>
</dbReference>
<dbReference type="GO" id="GO:0003677">
    <property type="term" value="F:DNA binding"/>
    <property type="evidence" value="ECO:0007669"/>
    <property type="project" value="UniProtKB-KW"/>
</dbReference>
<dbReference type="GO" id="GO:0008270">
    <property type="term" value="F:zinc ion binding"/>
    <property type="evidence" value="ECO:0007669"/>
    <property type="project" value="UniProtKB-UniRule"/>
</dbReference>
<dbReference type="GO" id="GO:0045892">
    <property type="term" value="P:negative regulation of DNA-templated transcription"/>
    <property type="evidence" value="ECO:0007669"/>
    <property type="project" value="UniProtKB-UniRule"/>
</dbReference>
<dbReference type="HAMAP" id="MF_00440">
    <property type="entry name" value="NrdR"/>
    <property type="match status" value="1"/>
</dbReference>
<dbReference type="InterPro" id="IPR005144">
    <property type="entry name" value="ATP-cone_dom"/>
</dbReference>
<dbReference type="InterPro" id="IPR055173">
    <property type="entry name" value="NrdR-like_N"/>
</dbReference>
<dbReference type="InterPro" id="IPR003796">
    <property type="entry name" value="RNR_NrdR-like"/>
</dbReference>
<dbReference type="NCBIfam" id="TIGR00244">
    <property type="entry name" value="transcriptional regulator NrdR"/>
    <property type="match status" value="1"/>
</dbReference>
<dbReference type="PANTHER" id="PTHR30455">
    <property type="entry name" value="TRANSCRIPTIONAL REPRESSOR NRDR"/>
    <property type="match status" value="1"/>
</dbReference>
<dbReference type="PANTHER" id="PTHR30455:SF2">
    <property type="entry name" value="TRANSCRIPTIONAL REPRESSOR NRDR"/>
    <property type="match status" value="1"/>
</dbReference>
<dbReference type="Pfam" id="PF03477">
    <property type="entry name" value="ATP-cone"/>
    <property type="match status" value="1"/>
</dbReference>
<dbReference type="Pfam" id="PF22811">
    <property type="entry name" value="Zn_ribbon_NrdR"/>
    <property type="match status" value="1"/>
</dbReference>
<dbReference type="PROSITE" id="PS51161">
    <property type="entry name" value="ATP_CONE"/>
    <property type="match status" value="1"/>
</dbReference>
<name>NRDR_STAS1</name>
<sequence length="156" mass="18468">MKCPKCNSTHSRVVDSRHADEVNAIRRRRECEECETRFTTFEHIEKRPLIVVKKDGTREQFLREKILNGLVRSCEKRPVRYEQLEDITNNVEWKLRDEGRAEISSREIGEHVMNLLMHVDQVSYVRFASVYKEFKDVDQLLQSMQGILAENKRSDS</sequence>
<keyword id="KW-0067">ATP-binding</keyword>
<keyword id="KW-0238">DNA-binding</keyword>
<keyword id="KW-0479">Metal-binding</keyword>
<keyword id="KW-0547">Nucleotide-binding</keyword>
<keyword id="KW-1185">Reference proteome</keyword>
<keyword id="KW-0678">Repressor</keyword>
<keyword id="KW-0804">Transcription</keyword>
<keyword id="KW-0805">Transcription regulation</keyword>
<keyword id="KW-0862">Zinc</keyword>
<keyword id="KW-0863">Zinc-finger</keyword>
<accession>Q49YB7</accession>
<organism>
    <name type="scientific">Staphylococcus saprophyticus subsp. saprophyticus (strain ATCC 15305 / DSM 20229 / NCIMB 8711 / NCTC 7292 / S-41)</name>
    <dbReference type="NCBI Taxonomy" id="342451"/>
    <lineage>
        <taxon>Bacteria</taxon>
        <taxon>Bacillati</taxon>
        <taxon>Bacillota</taxon>
        <taxon>Bacilli</taxon>
        <taxon>Bacillales</taxon>
        <taxon>Staphylococcaceae</taxon>
        <taxon>Staphylococcus</taxon>
    </lineage>
</organism>